<keyword id="KW-0249">Electron transport</keyword>
<keyword id="KW-0472">Membrane</keyword>
<keyword id="KW-0496">Mitochondrion</keyword>
<keyword id="KW-0520">NAD</keyword>
<keyword id="KW-0679">Respiratory chain</keyword>
<keyword id="KW-1278">Translocase</keyword>
<keyword id="KW-0812">Transmembrane</keyword>
<keyword id="KW-1133">Transmembrane helix</keyword>
<keyword id="KW-0813">Transport</keyword>
<keyword id="KW-0830">Ubiquinone</keyword>
<protein>
    <recommendedName>
        <fullName>NADH-ubiquinone oxidoreductase chain 6</fullName>
        <ecNumber>7.1.1.2</ecNumber>
    </recommendedName>
    <alternativeName>
        <fullName>NADH dehydrogenase subunit 6</fullName>
    </alternativeName>
</protein>
<accession>P33513</accession>
<comment type="function">
    <text evidence="1">Core subunit of the mitochondrial membrane respiratory chain NADH dehydrogenase (Complex I) that is believed to belong to the minimal assembly required for catalysis. Complex I functions in the transfer of electrons from NADH to the respiratory chain. The immediate electron acceptor for the enzyme is believed to be ubiquinone (By similarity).</text>
</comment>
<comment type="catalytic activity">
    <reaction>
        <text>a ubiquinone + NADH + 5 H(+)(in) = a ubiquinol + NAD(+) + 4 H(+)(out)</text>
        <dbReference type="Rhea" id="RHEA:29091"/>
        <dbReference type="Rhea" id="RHEA-COMP:9565"/>
        <dbReference type="Rhea" id="RHEA-COMP:9566"/>
        <dbReference type="ChEBI" id="CHEBI:15378"/>
        <dbReference type="ChEBI" id="CHEBI:16389"/>
        <dbReference type="ChEBI" id="CHEBI:17976"/>
        <dbReference type="ChEBI" id="CHEBI:57540"/>
        <dbReference type="ChEBI" id="CHEBI:57945"/>
        <dbReference type="EC" id="7.1.1.2"/>
    </reaction>
</comment>
<comment type="subcellular location">
    <subcellularLocation>
        <location evidence="3">Mitochondrion membrane</location>
        <topology evidence="3">Multi-pass membrane protein</topology>
    </subcellularLocation>
</comment>
<comment type="similarity">
    <text evidence="3">Belongs to the complex I subunit 6 family.</text>
</comment>
<evidence type="ECO:0000250" key="1"/>
<evidence type="ECO:0000255" key="2"/>
<evidence type="ECO:0000305" key="3"/>
<geneLocation type="mitochondrion"/>
<gene>
    <name type="primary">ND6</name>
</gene>
<organism>
    <name type="scientific">Anopheles quadrimaculatus</name>
    <name type="common">Common malaria mosquito</name>
    <dbReference type="NCBI Taxonomy" id="7166"/>
    <lineage>
        <taxon>Eukaryota</taxon>
        <taxon>Metazoa</taxon>
        <taxon>Ecdysozoa</taxon>
        <taxon>Arthropoda</taxon>
        <taxon>Hexapoda</taxon>
        <taxon>Insecta</taxon>
        <taxon>Pterygota</taxon>
        <taxon>Neoptera</taxon>
        <taxon>Endopterygota</taxon>
        <taxon>Diptera</taxon>
        <taxon>Nematocera</taxon>
        <taxon>Culicoidea</taxon>
        <taxon>Culicidae</taxon>
        <taxon>Anophelinae</taxon>
        <taxon>Anopheles</taxon>
    </lineage>
</organism>
<feature type="chain" id="PRO_0000118240" description="NADH-ubiquinone oxidoreductase chain 6">
    <location>
        <begin position="1"/>
        <end position="174"/>
    </location>
</feature>
<feature type="transmembrane region" description="Helical" evidence="2">
    <location>
        <begin position="4"/>
        <end position="24"/>
    </location>
</feature>
<feature type="transmembrane region" description="Helical" evidence="2">
    <location>
        <begin position="25"/>
        <end position="45"/>
    </location>
</feature>
<feature type="transmembrane region" description="Helical" evidence="2">
    <location>
        <begin position="48"/>
        <end position="68"/>
    </location>
</feature>
<feature type="transmembrane region" description="Helical" evidence="2">
    <location>
        <begin position="82"/>
        <end position="102"/>
    </location>
</feature>
<feature type="transmembrane region" description="Helical" evidence="2">
    <location>
        <begin position="143"/>
        <end position="163"/>
    </location>
</feature>
<sequence>MTKLIIMTICLIISFIFMQMKHPLSMGLMLLTQTFLTCLLTGIYVKTFWFSYVLFLIFLGGMLILFIYVHSLSSNEMFTMSFNLTTLSLLIFFLMTLFFFIIDKSLIEQFISNMEMEMFSFNNNLINENILFLNKMYNFPTNLITLLLINYLFLTLLVTVKITKKFYGPLRPMN</sequence>
<proteinExistence type="inferred from homology"/>
<name>NU6M_ANOQU</name>
<reference key="1">
    <citation type="journal article" date="1990" name="Arch. Insect Biochem. Physiol.">
        <title>Cloning of the mitochondrial genome of Anopheles quadrimaculatus.</title>
        <authorList>
            <person name="Cockburn A.F."/>
            <person name="Mitchell S.E."/>
            <person name="Seawright J.A."/>
        </authorList>
    </citation>
    <scope>NUCLEOTIDE SEQUENCE [GENOMIC DNA]</scope>
    <source>
        <strain>Orlando</strain>
    </source>
</reference>
<dbReference type="EC" id="7.1.1.2"/>
<dbReference type="EMBL" id="L04272">
    <property type="protein sequence ID" value="AAA93550.1"/>
    <property type="molecule type" value="Genomic_DNA"/>
</dbReference>
<dbReference type="SMR" id="P33513"/>
<dbReference type="GO" id="GO:0031966">
    <property type="term" value="C:mitochondrial membrane"/>
    <property type="evidence" value="ECO:0007669"/>
    <property type="project" value="UniProtKB-SubCell"/>
</dbReference>
<dbReference type="GO" id="GO:0008137">
    <property type="term" value="F:NADH dehydrogenase (ubiquinone) activity"/>
    <property type="evidence" value="ECO:0007669"/>
    <property type="project" value="UniProtKB-EC"/>
</dbReference>
<dbReference type="InterPro" id="IPR050269">
    <property type="entry name" value="ComplexI_Subunit6"/>
</dbReference>
<dbReference type="PANTHER" id="PTHR11435">
    <property type="entry name" value="NADH UBIQUINONE OXIDOREDUCTASE SUBUNIT ND6"/>
    <property type="match status" value="1"/>
</dbReference>
<dbReference type="PANTHER" id="PTHR11435:SF1">
    <property type="entry name" value="NADH-UBIQUINONE OXIDOREDUCTASE CHAIN 6"/>
    <property type="match status" value="1"/>
</dbReference>